<keyword id="KW-0150">Chloroplast</keyword>
<keyword id="KW-0934">Plastid</keyword>
<keyword id="KW-0687">Ribonucleoprotein</keyword>
<keyword id="KW-0689">Ribosomal protein</keyword>
<keyword id="KW-0694">RNA-binding</keyword>
<keyword id="KW-0699">rRNA-binding</keyword>
<organism>
    <name type="scientific">Calycanthus floridus var. glaucus</name>
    <name type="common">Eastern sweetshrub</name>
    <name type="synonym">Calycanthus fertilis var. ferax</name>
    <dbReference type="NCBI Taxonomy" id="212734"/>
    <lineage>
        <taxon>Eukaryota</taxon>
        <taxon>Viridiplantae</taxon>
        <taxon>Streptophyta</taxon>
        <taxon>Embryophyta</taxon>
        <taxon>Tracheophyta</taxon>
        <taxon>Spermatophyta</taxon>
        <taxon>Magnoliopsida</taxon>
        <taxon>Magnoliidae</taxon>
        <taxon>Laurales</taxon>
        <taxon>Calycanthaceae</taxon>
        <taxon>Calycanthus</taxon>
    </lineage>
</organism>
<evidence type="ECO:0000255" key="1">
    <source>
        <dbReference type="HAMAP-Rule" id="MF_01367"/>
    </source>
</evidence>
<evidence type="ECO:0000305" key="2"/>
<reference key="1">
    <citation type="journal article" date="2003" name="Plant Syst. Evol.">
        <title>The chloroplast genome of the 'basal' angiosperm Calycanthus fertilis -- structural and phylogenetic analyses.</title>
        <authorList>
            <person name="Goremykin V."/>
            <person name="Hirsch-Ernst K.I."/>
            <person name="Woelfl S."/>
            <person name="Hellwig F.H."/>
        </authorList>
    </citation>
    <scope>NUCLEOTIDE SEQUENCE [LARGE SCALE GENOMIC DNA]</scope>
</reference>
<gene>
    <name evidence="1" type="primary">rpl14</name>
</gene>
<protein>
    <recommendedName>
        <fullName evidence="1">Large ribosomal subunit protein uL14c</fullName>
    </recommendedName>
    <alternativeName>
        <fullName evidence="2">50S ribosomal protein L14, chloroplastic</fullName>
    </alternativeName>
</protein>
<feature type="chain" id="PRO_0000276336" description="Large ribosomal subunit protein uL14c">
    <location>
        <begin position="1"/>
        <end position="122"/>
    </location>
</feature>
<name>RK14_CALFG</name>
<proteinExistence type="inferred from homology"/>
<dbReference type="EMBL" id="AJ428413">
    <property type="protein sequence ID" value="CAD28757.1"/>
    <property type="molecule type" value="Genomic_DNA"/>
</dbReference>
<dbReference type="RefSeq" id="NP_862790.1">
    <property type="nucleotide sequence ID" value="NC_004993.1"/>
</dbReference>
<dbReference type="SMR" id="Q7YJU2"/>
<dbReference type="GeneID" id="2598021"/>
<dbReference type="GO" id="GO:0009507">
    <property type="term" value="C:chloroplast"/>
    <property type="evidence" value="ECO:0007669"/>
    <property type="project" value="UniProtKB-SubCell"/>
</dbReference>
<dbReference type="GO" id="GO:0022625">
    <property type="term" value="C:cytosolic large ribosomal subunit"/>
    <property type="evidence" value="ECO:0007669"/>
    <property type="project" value="TreeGrafter"/>
</dbReference>
<dbReference type="GO" id="GO:0070180">
    <property type="term" value="F:large ribosomal subunit rRNA binding"/>
    <property type="evidence" value="ECO:0007669"/>
    <property type="project" value="TreeGrafter"/>
</dbReference>
<dbReference type="GO" id="GO:0003735">
    <property type="term" value="F:structural constituent of ribosome"/>
    <property type="evidence" value="ECO:0007669"/>
    <property type="project" value="InterPro"/>
</dbReference>
<dbReference type="GO" id="GO:0006412">
    <property type="term" value="P:translation"/>
    <property type="evidence" value="ECO:0007669"/>
    <property type="project" value="UniProtKB-UniRule"/>
</dbReference>
<dbReference type="CDD" id="cd00337">
    <property type="entry name" value="Ribosomal_uL14"/>
    <property type="match status" value="1"/>
</dbReference>
<dbReference type="FunFam" id="2.40.150.20:FF:000002">
    <property type="entry name" value="50S ribosomal protein L14, chloroplastic"/>
    <property type="match status" value="1"/>
</dbReference>
<dbReference type="Gene3D" id="2.40.150.20">
    <property type="entry name" value="Ribosomal protein L14"/>
    <property type="match status" value="1"/>
</dbReference>
<dbReference type="HAMAP" id="MF_01367">
    <property type="entry name" value="Ribosomal_uL14"/>
    <property type="match status" value="1"/>
</dbReference>
<dbReference type="InterPro" id="IPR000218">
    <property type="entry name" value="Ribosomal_uL14"/>
</dbReference>
<dbReference type="InterPro" id="IPR005745">
    <property type="entry name" value="Ribosomal_uL14_bac-type"/>
</dbReference>
<dbReference type="InterPro" id="IPR019972">
    <property type="entry name" value="Ribosomal_uL14_CS"/>
</dbReference>
<dbReference type="InterPro" id="IPR036853">
    <property type="entry name" value="Ribosomal_uL14_sf"/>
</dbReference>
<dbReference type="NCBIfam" id="TIGR01067">
    <property type="entry name" value="rplN_bact"/>
    <property type="match status" value="1"/>
</dbReference>
<dbReference type="PANTHER" id="PTHR11761">
    <property type="entry name" value="50S/60S RIBOSOMAL PROTEIN L14/L23"/>
    <property type="match status" value="1"/>
</dbReference>
<dbReference type="PANTHER" id="PTHR11761:SF3">
    <property type="entry name" value="LARGE RIBOSOMAL SUBUNIT PROTEIN UL14M"/>
    <property type="match status" value="1"/>
</dbReference>
<dbReference type="Pfam" id="PF00238">
    <property type="entry name" value="Ribosomal_L14"/>
    <property type="match status" value="1"/>
</dbReference>
<dbReference type="SMART" id="SM01374">
    <property type="entry name" value="Ribosomal_L14"/>
    <property type="match status" value="1"/>
</dbReference>
<dbReference type="SUPFAM" id="SSF50193">
    <property type="entry name" value="Ribosomal protein L14"/>
    <property type="match status" value="1"/>
</dbReference>
<dbReference type="PROSITE" id="PS00049">
    <property type="entry name" value="RIBOSOMAL_L14"/>
    <property type="match status" value="1"/>
</dbReference>
<accession>Q7YJU2</accession>
<geneLocation type="chloroplast"/>
<sequence>MIQPQTHLNVADNSGARELMCIRIIGASNRRYAHIGDVIVAVIKEAVPNMPLERSEVIRAVIVRTCKELKRDNGMIIRYDDNAAVVIDQEGNPKGTRVFGAIARELRKLNFTKIVSLAPEVL</sequence>
<comment type="function">
    <text evidence="1">Binds to 23S rRNA.</text>
</comment>
<comment type="subunit">
    <text evidence="1">Part of the 50S ribosomal subunit.</text>
</comment>
<comment type="subcellular location">
    <subcellularLocation>
        <location>Plastid</location>
        <location>Chloroplast</location>
    </subcellularLocation>
</comment>
<comment type="similarity">
    <text evidence="1">Belongs to the universal ribosomal protein uL14 family.</text>
</comment>